<feature type="chain" id="PRO_0000058475" description="U24-ctenitoxin-Pn1a">
    <location>
        <begin position="1"/>
        <end position="128"/>
    </location>
</feature>
<feature type="domain" description="Thyroglobulin type-1 1" evidence="2">
    <location>
        <begin position="4"/>
        <end position="67"/>
    </location>
</feature>
<feature type="domain" description="Thyroglobulin type-1 2" evidence="2">
    <location>
        <begin position="72"/>
        <end position="127"/>
    </location>
</feature>
<feature type="disulfide bond" evidence="2">
    <location>
        <begin position="7"/>
        <end position="27"/>
    </location>
</feature>
<feature type="disulfide bond" evidence="2">
    <location>
        <begin position="38"/>
        <end position="45"/>
    </location>
</feature>
<feature type="disulfide bond" evidence="2">
    <location>
        <begin position="47"/>
        <end position="67"/>
    </location>
</feature>
<feature type="disulfide bond" evidence="2">
    <location>
        <begin position="107"/>
        <end position="127"/>
    </location>
</feature>
<feature type="sequence variant" evidence="3">
    <original>S</original>
    <variation>G</variation>
    <location>
        <position position="31"/>
    </location>
</feature>
<feature type="sequence variant" evidence="3">
    <original>H</original>
    <variation>Y</variation>
    <location>
        <position position="119"/>
    </location>
</feature>
<feature type="sequence variant" evidence="3">
    <original>K</original>
    <variation>N</variation>
    <location>
        <position position="126"/>
    </location>
</feature>
<name>PN16_PHONI</name>
<proteinExistence type="evidence at protein level"/>
<accession>P84032</accession>
<protein>
    <recommendedName>
        <fullName>U24-ctenitoxin-Pn1a</fullName>
        <shortName>U24-CNTX-Pn1a</shortName>
    </recommendedName>
    <alternativeName>
        <fullName evidence="4">Venom protein PN16C3</fullName>
    </alternativeName>
</protein>
<comment type="function">
    <text evidence="1">Cysteine proteinase inhibitor.</text>
</comment>
<comment type="subcellular location">
    <subcellularLocation>
        <location evidence="3">Secreted</location>
    </subcellularLocation>
</comment>
<comment type="tissue specificity">
    <text evidence="3">Expressed by the venom gland.</text>
</comment>
<comment type="mass spectrometry" mass="14778.05" error="0.03" method="Electrospray" evidence="3"/>
<reference evidence="5" key="1">
    <citation type="submission" date="2004-06" db="UniProtKB">
        <title>Protein PN16C3 from venom of Phoneutria nigriventer has sequence similarities with inhibitors of cysteinyl proteinases.</title>
        <authorList>
            <person name="Richardson M."/>
            <person name="Pimenta A.M.C."/>
            <person name="Bemquerer M.P."/>
            <person name="Santoro M.M."/>
            <person name="Figueiredo S.G."/>
            <person name="Cordeiro M.N."/>
        </authorList>
    </citation>
    <scope>PROTEIN SEQUENCE</scope>
    <scope>SUBCELLULAR LOCATION</scope>
    <scope>TISSUE SPECIFICITY</scope>
    <scope>MASS SPECTROMETRY</scope>
    <scope>VARIANTS GLY-31; TYR-119 AND ASN-126</scope>
    <source>
        <tissue>Venom</tissue>
    </source>
</reference>
<sequence length="128" mass="14788">ARPKSDCEKHRESTEKTGTIMKLIPKCKENSDYEELQCYEDSKFCVCYDKKGHAASPISTKVKECGCYLKQKERKDSGRESAIIPQCEEDGKWAKKQLWEFNKSCWCVDEKGEQVGKIHHDCDSLKCE</sequence>
<evidence type="ECO:0000250" key="1">
    <source>
        <dbReference type="UniProtKB" id="P81439"/>
    </source>
</evidence>
<evidence type="ECO:0000255" key="2">
    <source>
        <dbReference type="PROSITE-ProRule" id="PRU00500"/>
    </source>
</evidence>
<evidence type="ECO:0000269" key="3">
    <source ref="1"/>
</evidence>
<evidence type="ECO:0000303" key="4">
    <source ref="1"/>
</evidence>
<evidence type="ECO:0000305" key="5"/>
<keyword id="KW-0903">Direct protein sequencing</keyword>
<keyword id="KW-1015">Disulfide bond</keyword>
<keyword id="KW-0646">Protease inhibitor</keyword>
<keyword id="KW-0677">Repeat</keyword>
<keyword id="KW-0964">Secreted</keyword>
<keyword id="KW-0789">Thiol protease inhibitor</keyword>
<dbReference type="SMR" id="P84032"/>
<dbReference type="ArachnoServer" id="AS000010">
    <property type="toxin name" value="U24-ctenitoxin-Pn1a"/>
</dbReference>
<dbReference type="GO" id="GO:0005604">
    <property type="term" value="C:basement membrane"/>
    <property type="evidence" value="ECO:0007669"/>
    <property type="project" value="TreeGrafter"/>
</dbReference>
<dbReference type="GO" id="GO:0005615">
    <property type="term" value="C:extracellular space"/>
    <property type="evidence" value="ECO:0007669"/>
    <property type="project" value="TreeGrafter"/>
</dbReference>
<dbReference type="GO" id="GO:0004869">
    <property type="term" value="F:cysteine-type endopeptidase inhibitor activity"/>
    <property type="evidence" value="ECO:0007669"/>
    <property type="project" value="UniProtKB-KW"/>
</dbReference>
<dbReference type="GO" id="GO:0007160">
    <property type="term" value="P:cell-matrix adhesion"/>
    <property type="evidence" value="ECO:0007669"/>
    <property type="project" value="TreeGrafter"/>
</dbReference>
<dbReference type="Gene3D" id="4.10.800.10">
    <property type="entry name" value="Thyroglobulin type-1"/>
    <property type="match status" value="2"/>
</dbReference>
<dbReference type="InterPro" id="IPR051950">
    <property type="entry name" value="Dev_reg/Prot_inhib"/>
</dbReference>
<dbReference type="InterPro" id="IPR000716">
    <property type="entry name" value="Thyroglobulin_1"/>
</dbReference>
<dbReference type="InterPro" id="IPR036857">
    <property type="entry name" value="Thyroglobulin_1_sf"/>
</dbReference>
<dbReference type="PANTHER" id="PTHR12352:SF3">
    <property type="entry name" value="NIDOGEN-2"/>
    <property type="match status" value="1"/>
</dbReference>
<dbReference type="PANTHER" id="PTHR12352">
    <property type="entry name" value="SECRETED MODULAR CALCIUM-BINDING PROTEIN"/>
    <property type="match status" value="1"/>
</dbReference>
<dbReference type="Pfam" id="PF00086">
    <property type="entry name" value="Thyroglobulin_1"/>
    <property type="match status" value="2"/>
</dbReference>
<dbReference type="SMART" id="SM00211">
    <property type="entry name" value="TY"/>
    <property type="match status" value="2"/>
</dbReference>
<dbReference type="SUPFAM" id="SSF57610">
    <property type="entry name" value="Thyroglobulin type-1 domain"/>
    <property type="match status" value="2"/>
</dbReference>
<dbReference type="PROSITE" id="PS51162">
    <property type="entry name" value="THYROGLOBULIN_1_2"/>
    <property type="match status" value="2"/>
</dbReference>
<organism>
    <name type="scientific">Phoneutria nigriventer</name>
    <name type="common">Brazilian armed spider</name>
    <name type="synonym">Ctenus nigriventer</name>
    <dbReference type="NCBI Taxonomy" id="6918"/>
    <lineage>
        <taxon>Eukaryota</taxon>
        <taxon>Metazoa</taxon>
        <taxon>Ecdysozoa</taxon>
        <taxon>Arthropoda</taxon>
        <taxon>Chelicerata</taxon>
        <taxon>Arachnida</taxon>
        <taxon>Araneae</taxon>
        <taxon>Araneomorphae</taxon>
        <taxon>Entelegynae</taxon>
        <taxon>Lycosoidea</taxon>
        <taxon>Ctenidae</taxon>
        <taxon>Phoneutria</taxon>
    </lineage>
</organism>